<sequence length="401" mass="44429">MSWQQFKHAWLIKFWAPIPAVIAAGILSTYYFGITGTFWAVTGEFTRWGGQLLQLFGVHAEEWGYFKIIHLEGSPLTRIDGMMILGMFGGCFAAALWANNVKLRMPRSRIRIMQAIIGGIIAGFGARLAMGCNLAAFFTGIPQFSLHAWFFAIATAIGSWFGARFTLLPIFRIPVKMQKVSAASPLTQKPDQARRRFRLGMLVFFGMLGWALLTAMNQPKLGLAMLFGVGFGLLIERAQICFTSAFRDMWITGRTHMAKAIIIGMAVSAIGIFSYVQLGVEPKIMWAGPNAVIGGLLFGFGIVLAGGCETGWMYRAVEGQVHYWWVGLGNVIGSTILAYYWDDFAPALATDWDKINLLKTFGPMGGLLVTYLLLFAALMLIIGWEKRFFRRAAPQTAKEIA</sequence>
<evidence type="ECO:0000255" key="1"/>
<evidence type="ECO:0000269" key="2">
    <source>
    </source>
</evidence>
<evidence type="ECO:0000305" key="3"/>
<keyword id="KW-0997">Cell inner membrane</keyword>
<keyword id="KW-1003">Cell membrane</keyword>
<keyword id="KW-0472">Membrane</keyword>
<keyword id="KW-1185">Reference proteome</keyword>
<keyword id="KW-0812">Transmembrane</keyword>
<keyword id="KW-1133">Transmembrane helix</keyword>
<keyword id="KW-0813">Transport</keyword>
<comment type="interaction">
    <interactant intactId="EBI-544094">
        <id>P31064</id>
    </interactant>
    <interactant intactId="EBI-544087">
        <id>P15770</id>
        <label>aroE</label>
    </interactant>
    <organismsDiffer>false</organismsDiffer>
    <experiments>2</experiments>
</comment>
<comment type="subcellular location">
    <subcellularLocation>
        <location evidence="2">Cell inner membrane</location>
        <topology evidence="1">Multi-pass membrane protein</topology>
    </subcellularLocation>
</comment>
<comment type="similarity">
    <text evidence="3">Belongs to the TsuA/YedE (TC 9.B.102) family.</text>
</comment>
<proteinExistence type="evidence at protein level"/>
<dbReference type="EMBL" id="L13279">
    <property type="protein sequence ID" value="AAA82577.1"/>
    <property type="molecule type" value="Genomic_DNA"/>
</dbReference>
<dbReference type="EMBL" id="U00096">
    <property type="protein sequence ID" value="AAC74996.1"/>
    <property type="molecule type" value="Genomic_DNA"/>
</dbReference>
<dbReference type="EMBL" id="AP009048">
    <property type="protein sequence ID" value="BAA15757.1"/>
    <property type="molecule type" value="Genomic_DNA"/>
</dbReference>
<dbReference type="PIR" id="F64956">
    <property type="entry name" value="F64956"/>
</dbReference>
<dbReference type="RefSeq" id="NP_416439.1">
    <property type="nucleotide sequence ID" value="NC_000913.3"/>
</dbReference>
<dbReference type="RefSeq" id="WP_000118897.1">
    <property type="nucleotide sequence ID" value="NZ_SSUR01000001.1"/>
</dbReference>
<dbReference type="SMR" id="P31064"/>
<dbReference type="BioGRID" id="4261058">
    <property type="interactions" value="171"/>
</dbReference>
<dbReference type="DIP" id="DIP-11839N"/>
<dbReference type="FunCoup" id="P31064">
    <property type="interactions" value="5"/>
</dbReference>
<dbReference type="IntAct" id="P31064">
    <property type="interactions" value="1"/>
</dbReference>
<dbReference type="STRING" id="511145.b1929"/>
<dbReference type="TCDB" id="9.B.102.1.1">
    <property type="family name" value="the yede/yeee (yede/yeee) family"/>
</dbReference>
<dbReference type="jPOST" id="P31064"/>
<dbReference type="PaxDb" id="511145-b1929"/>
<dbReference type="EnsemblBacteria" id="AAC74996">
    <property type="protein sequence ID" value="AAC74996"/>
    <property type="gene ID" value="b1929"/>
</dbReference>
<dbReference type="GeneID" id="75172051"/>
<dbReference type="GeneID" id="945192"/>
<dbReference type="KEGG" id="ecj:JW1914"/>
<dbReference type="KEGG" id="eco:b1929"/>
<dbReference type="KEGG" id="ecoc:C3026_10940"/>
<dbReference type="PATRIC" id="fig|1411691.4.peg.320"/>
<dbReference type="EchoBASE" id="EB1612"/>
<dbReference type="eggNOG" id="COG2391">
    <property type="taxonomic scope" value="Bacteria"/>
</dbReference>
<dbReference type="HOGENOM" id="CLU_041737_0_0_6"/>
<dbReference type="InParanoid" id="P31064"/>
<dbReference type="OMA" id="KIFWMGP"/>
<dbReference type="OrthoDB" id="9794165at2"/>
<dbReference type="PhylomeDB" id="P31064"/>
<dbReference type="BioCyc" id="EcoCyc:EG11660-MONOMER"/>
<dbReference type="PRO" id="PR:P31064"/>
<dbReference type="Proteomes" id="UP000000625">
    <property type="component" value="Chromosome"/>
</dbReference>
<dbReference type="GO" id="GO:0005886">
    <property type="term" value="C:plasma membrane"/>
    <property type="evidence" value="ECO:0000314"/>
    <property type="project" value="EcoCyc"/>
</dbReference>
<dbReference type="InterPro" id="IPR007272">
    <property type="entry name" value="Sulf_transp_TsuA/YedE"/>
</dbReference>
<dbReference type="InterPro" id="IPR047732">
    <property type="entry name" value="YedE-like"/>
</dbReference>
<dbReference type="NCBIfam" id="NF033796">
    <property type="entry name" value="selen_YedE_FdhT"/>
    <property type="match status" value="1"/>
</dbReference>
<dbReference type="PANTHER" id="PTHR30574">
    <property type="entry name" value="INNER MEMBRANE PROTEIN YEDE"/>
    <property type="match status" value="1"/>
</dbReference>
<dbReference type="PANTHER" id="PTHR30574:SF1">
    <property type="entry name" value="SULPHUR TRANSPORT DOMAIN-CONTAINING PROTEIN"/>
    <property type="match status" value="1"/>
</dbReference>
<dbReference type="Pfam" id="PF04143">
    <property type="entry name" value="Sulf_transp"/>
    <property type="match status" value="2"/>
</dbReference>
<accession>P31064</accession>
<name>YEDE_ECOLI</name>
<feature type="chain" id="PRO_0000169090" description="Probable transporter YedE">
    <location>
        <begin position="1"/>
        <end position="401"/>
    </location>
</feature>
<feature type="topological domain" description="Cytoplasmic" evidence="3">
    <location>
        <begin position="1"/>
        <end position="13"/>
    </location>
</feature>
<feature type="transmembrane region" description="Helical" evidence="1">
    <location>
        <begin position="14"/>
        <end position="34"/>
    </location>
</feature>
<feature type="topological domain" description="Periplasmic" evidence="3">
    <location>
        <begin position="35"/>
        <end position="78"/>
    </location>
</feature>
<feature type="transmembrane region" description="Helical" evidence="1">
    <location>
        <begin position="79"/>
        <end position="99"/>
    </location>
</feature>
<feature type="topological domain" description="Cytoplasmic" evidence="3">
    <location>
        <begin position="100"/>
        <end position="115"/>
    </location>
</feature>
<feature type="transmembrane region" description="Helical" evidence="1">
    <location>
        <begin position="116"/>
        <end position="138"/>
    </location>
</feature>
<feature type="topological domain" description="Periplasmic" evidence="3">
    <location>
        <begin position="139"/>
        <end position="147"/>
    </location>
</feature>
<feature type="transmembrane region" description="Helical" evidence="1">
    <location>
        <begin position="148"/>
        <end position="170"/>
    </location>
</feature>
<feature type="topological domain" description="Cytoplasmic" evidence="3">
    <location>
        <begin position="171"/>
        <end position="198"/>
    </location>
</feature>
<feature type="transmembrane region" description="Helical" evidence="1">
    <location>
        <begin position="199"/>
        <end position="219"/>
    </location>
</feature>
<feature type="topological domain" description="Periplasmic" evidence="3">
    <location>
        <begin position="220"/>
        <end position="221"/>
    </location>
</feature>
<feature type="transmembrane region" description="Helical" evidence="1">
    <location>
        <begin position="222"/>
        <end position="242"/>
    </location>
</feature>
<feature type="topological domain" description="Cytoplasmic" evidence="3">
    <location>
        <begin position="243"/>
        <end position="259"/>
    </location>
</feature>
<feature type="transmembrane region" description="Helical" evidence="1">
    <location>
        <begin position="260"/>
        <end position="280"/>
    </location>
</feature>
<feature type="topological domain" description="Periplasmic" evidence="3">
    <location>
        <begin position="281"/>
        <end position="283"/>
    </location>
</feature>
<feature type="transmembrane region" description="Helical" evidence="1">
    <location>
        <begin position="284"/>
        <end position="304"/>
    </location>
</feature>
<feature type="topological domain" description="Cytoplasmic" evidence="3">
    <location>
        <begin position="305"/>
        <end position="320"/>
    </location>
</feature>
<feature type="transmembrane region" description="Helical" evidence="1">
    <location>
        <begin position="321"/>
        <end position="341"/>
    </location>
</feature>
<feature type="topological domain" description="Periplasmic" evidence="3">
    <location>
        <begin position="342"/>
        <end position="363"/>
    </location>
</feature>
<feature type="transmembrane region" description="Helical" evidence="1">
    <location>
        <begin position="364"/>
        <end position="384"/>
    </location>
</feature>
<feature type="topological domain" description="Cytoplasmic" evidence="2">
    <location>
        <begin position="385"/>
        <end position="401"/>
    </location>
</feature>
<organism>
    <name type="scientific">Escherichia coli (strain K12)</name>
    <dbReference type="NCBI Taxonomy" id="83333"/>
    <lineage>
        <taxon>Bacteria</taxon>
        <taxon>Pseudomonadati</taxon>
        <taxon>Pseudomonadota</taxon>
        <taxon>Gammaproteobacteria</taxon>
        <taxon>Enterobacterales</taxon>
        <taxon>Enterobacteriaceae</taxon>
        <taxon>Escherichia</taxon>
    </lineage>
</organism>
<reference key="1">
    <citation type="journal article" date="1993" name="J. Gen. Microbiol.">
        <title>Organization of the Escherichia coli and Salmonella typhimurium chromosomes between flagellar regions IIIa and IIIb, including a large non-coding region.</title>
        <authorList>
            <person name="Raha M."/>
            <person name="Kihara M."/>
            <person name="Kawagishi I."/>
            <person name="Macnab R.M."/>
        </authorList>
    </citation>
    <scope>NUCLEOTIDE SEQUENCE [GENOMIC DNA]</scope>
    <source>
        <strain>JA11</strain>
    </source>
</reference>
<reference key="2">
    <citation type="journal article" date="1996" name="DNA Res.">
        <title>A 460-kb DNA sequence of the Escherichia coli K-12 genome corresponding to the 40.1-50.0 min region on the linkage map.</title>
        <authorList>
            <person name="Itoh T."/>
            <person name="Aiba H."/>
            <person name="Baba T."/>
            <person name="Fujita K."/>
            <person name="Hayashi K."/>
            <person name="Inada T."/>
            <person name="Isono K."/>
            <person name="Kasai H."/>
            <person name="Kimura S."/>
            <person name="Kitakawa M."/>
            <person name="Kitagawa M."/>
            <person name="Makino K."/>
            <person name="Miki T."/>
            <person name="Mizobuchi K."/>
            <person name="Mori H."/>
            <person name="Mori T."/>
            <person name="Motomura K."/>
            <person name="Nakade S."/>
            <person name="Nakamura Y."/>
            <person name="Nashimoto H."/>
            <person name="Nishio Y."/>
            <person name="Oshima T."/>
            <person name="Saito N."/>
            <person name="Sampei G."/>
            <person name="Seki Y."/>
            <person name="Sivasundaram S."/>
            <person name="Tagami H."/>
            <person name="Takeda J."/>
            <person name="Takemoto K."/>
            <person name="Wada C."/>
            <person name="Yamamoto Y."/>
            <person name="Horiuchi T."/>
        </authorList>
    </citation>
    <scope>NUCLEOTIDE SEQUENCE [LARGE SCALE GENOMIC DNA]</scope>
    <source>
        <strain>K12 / W3110 / ATCC 27325 / DSM 5911</strain>
    </source>
</reference>
<reference key="3">
    <citation type="journal article" date="1997" name="Science">
        <title>The complete genome sequence of Escherichia coli K-12.</title>
        <authorList>
            <person name="Blattner F.R."/>
            <person name="Plunkett G. III"/>
            <person name="Bloch C.A."/>
            <person name="Perna N.T."/>
            <person name="Burland V."/>
            <person name="Riley M."/>
            <person name="Collado-Vides J."/>
            <person name="Glasner J.D."/>
            <person name="Rode C.K."/>
            <person name="Mayhew G.F."/>
            <person name="Gregor J."/>
            <person name="Davis N.W."/>
            <person name="Kirkpatrick H.A."/>
            <person name="Goeden M.A."/>
            <person name="Rose D.J."/>
            <person name="Mau B."/>
            <person name="Shao Y."/>
        </authorList>
    </citation>
    <scope>NUCLEOTIDE SEQUENCE [LARGE SCALE GENOMIC DNA]</scope>
    <source>
        <strain>K12 / MG1655 / ATCC 47076</strain>
    </source>
</reference>
<reference key="4">
    <citation type="journal article" date="2006" name="Mol. Syst. Biol.">
        <title>Highly accurate genome sequences of Escherichia coli K-12 strains MG1655 and W3110.</title>
        <authorList>
            <person name="Hayashi K."/>
            <person name="Morooka N."/>
            <person name="Yamamoto Y."/>
            <person name="Fujita K."/>
            <person name="Isono K."/>
            <person name="Choi S."/>
            <person name="Ohtsubo E."/>
            <person name="Baba T."/>
            <person name="Wanner B.L."/>
            <person name="Mori H."/>
            <person name="Horiuchi T."/>
        </authorList>
    </citation>
    <scope>NUCLEOTIDE SEQUENCE [LARGE SCALE GENOMIC DNA]</scope>
    <source>
        <strain>K12 / W3110 / ATCC 27325 / DSM 5911</strain>
    </source>
</reference>
<reference key="5">
    <citation type="journal article" date="2005" name="Science">
        <title>Global topology analysis of the Escherichia coli inner membrane proteome.</title>
        <authorList>
            <person name="Daley D.O."/>
            <person name="Rapp M."/>
            <person name="Granseth E."/>
            <person name="Melen K."/>
            <person name="Drew D."/>
            <person name="von Heijne G."/>
        </authorList>
    </citation>
    <scope>TOPOLOGY [LARGE SCALE ANALYSIS]</scope>
    <scope>SUBCELLULAR LOCATION</scope>
    <source>
        <strain>K12 / MG1655 / ATCC 47076</strain>
    </source>
</reference>
<protein>
    <recommendedName>
        <fullName evidence="3">Probable transporter YedE</fullName>
    </recommendedName>
</protein>
<gene>
    <name type="primary">yedE</name>
    <name type="ordered locus">b1929</name>
    <name type="ordered locus">JW1914</name>
</gene>